<dbReference type="EMBL" id="M11395">
    <property type="protein sequence ID" value="AAA33975.1"/>
    <property type="molecule type" value="Genomic_DNA"/>
</dbReference>
<dbReference type="PIR" id="T07629">
    <property type="entry name" value="T07629"/>
</dbReference>
<dbReference type="RefSeq" id="NP_001236198.2">
    <property type="nucleotide sequence ID" value="NM_001249269.2"/>
</dbReference>
<dbReference type="SMR" id="P04794"/>
<dbReference type="FunCoup" id="P04794">
    <property type="interactions" value="335"/>
</dbReference>
<dbReference type="STRING" id="3847.P04794"/>
<dbReference type="PaxDb" id="3847-GLYMA13G24440.1"/>
<dbReference type="EnsemblPlants" id="KRH20402">
    <property type="protein sequence ID" value="KRH20402"/>
    <property type="gene ID" value="GLYMA_13G176200"/>
</dbReference>
<dbReference type="GeneID" id="100305750"/>
<dbReference type="Gramene" id="KRH20402">
    <property type="protein sequence ID" value="KRH20402"/>
    <property type="gene ID" value="GLYMA_13G176200"/>
</dbReference>
<dbReference type="KEGG" id="gmx:100305750"/>
<dbReference type="eggNOG" id="KOG0710">
    <property type="taxonomic scope" value="Eukaryota"/>
</dbReference>
<dbReference type="InParanoid" id="P04794"/>
<dbReference type="OMA" id="QIWDAFD"/>
<dbReference type="OrthoDB" id="5511210at2759"/>
<dbReference type="Proteomes" id="UP000008827">
    <property type="component" value="Chromosome 13"/>
</dbReference>
<dbReference type="GO" id="GO:0005737">
    <property type="term" value="C:cytoplasm"/>
    <property type="evidence" value="ECO:0007669"/>
    <property type="project" value="UniProtKB-SubCell"/>
</dbReference>
<dbReference type="GO" id="GO:0051082">
    <property type="term" value="F:unfolded protein binding"/>
    <property type="evidence" value="ECO:0000318"/>
    <property type="project" value="GO_Central"/>
</dbReference>
<dbReference type="GO" id="GO:0051259">
    <property type="term" value="P:protein complex oligomerization"/>
    <property type="evidence" value="ECO:0000318"/>
    <property type="project" value="GO_Central"/>
</dbReference>
<dbReference type="GO" id="GO:0006457">
    <property type="term" value="P:protein folding"/>
    <property type="evidence" value="ECO:0000318"/>
    <property type="project" value="GO_Central"/>
</dbReference>
<dbReference type="GO" id="GO:0009408">
    <property type="term" value="P:response to heat"/>
    <property type="evidence" value="ECO:0000318"/>
    <property type="project" value="GO_Central"/>
</dbReference>
<dbReference type="GO" id="GO:0042542">
    <property type="term" value="P:response to hydrogen peroxide"/>
    <property type="evidence" value="ECO:0000318"/>
    <property type="project" value="GO_Central"/>
</dbReference>
<dbReference type="GO" id="GO:0009651">
    <property type="term" value="P:response to salt stress"/>
    <property type="evidence" value="ECO:0000318"/>
    <property type="project" value="GO_Central"/>
</dbReference>
<dbReference type="CDD" id="cd06472">
    <property type="entry name" value="ACD_ScHsp26_like"/>
    <property type="match status" value="1"/>
</dbReference>
<dbReference type="FunFam" id="2.60.40.790:FF:000009">
    <property type="entry name" value="17.6 kDa class I heat shock protein-like"/>
    <property type="match status" value="1"/>
</dbReference>
<dbReference type="Gene3D" id="2.60.40.790">
    <property type="match status" value="1"/>
</dbReference>
<dbReference type="InterPro" id="IPR002068">
    <property type="entry name" value="A-crystallin/Hsp20_dom"/>
</dbReference>
<dbReference type="InterPro" id="IPR008978">
    <property type="entry name" value="HSP20-like_chaperone"/>
</dbReference>
<dbReference type="InterPro" id="IPR031107">
    <property type="entry name" value="Small_HSP"/>
</dbReference>
<dbReference type="PANTHER" id="PTHR11527">
    <property type="entry name" value="HEAT-SHOCK PROTEIN 20 FAMILY MEMBER"/>
    <property type="match status" value="1"/>
</dbReference>
<dbReference type="Pfam" id="PF00011">
    <property type="entry name" value="HSP20"/>
    <property type="match status" value="1"/>
</dbReference>
<dbReference type="SUPFAM" id="SSF49764">
    <property type="entry name" value="HSP20-like chaperones"/>
    <property type="match status" value="1"/>
</dbReference>
<dbReference type="PROSITE" id="PS01031">
    <property type="entry name" value="SHSP"/>
    <property type="match status" value="1"/>
</dbReference>
<feature type="chain" id="PRO_0000125987" description="17.5 kDa class I heat shock protein">
    <location>
        <begin position="1"/>
        <end position="154"/>
    </location>
</feature>
<feature type="domain" description="sHSP" evidence="1">
    <location>
        <begin position="40"/>
        <end position="154"/>
    </location>
</feature>
<protein>
    <recommendedName>
        <fullName>17.5 kDa class I heat shock protein</fullName>
    </recommendedName>
    <alternativeName>
        <fullName>HSP 17.5-E</fullName>
    </alternativeName>
</protein>
<sequence>MSLIPGFFGGRRSNVFDPFSLDMWDPFKDFHVPTSSVSAENSAFVSTRVDWKETPEAHVFKADIPGLKKEEVKVQIEDDRVLQISGERNVEKEDKNDTWHRVERSSGKFTRRFRLPENAKVNEVKASMENGVLTVTVPKEEVKKPDVKAIEISG</sequence>
<gene>
    <name type="primary">HSP17.5-E</name>
</gene>
<proteinExistence type="inferred from homology"/>
<comment type="subunit">
    <text>Forms oligomeric structures.</text>
</comment>
<comment type="subcellular location">
    <subcellularLocation>
        <location>Cytoplasm</location>
    </subcellularLocation>
</comment>
<comment type="similarity">
    <text evidence="1">Belongs to the small heat shock protein (HSP20) family.</text>
</comment>
<accession>P04794</accession>
<evidence type="ECO:0000255" key="1">
    <source>
        <dbReference type="PROSITE-ProRule" id="PRU00285"/>
    </source>
</evidence>
<keyword id="KW-0963">Cytoplasm</keyword>
<keyword id="KW-1185">Reference proteome</keyword>
<keyword id="KW-0346">Stress response</keyword>
<reference key="1">
    <citation type="journal article" date="1985" name="Proc. Natl. Acad. Sci. U.S.A.">
        <title>DNA sequence and transcript mapping of a soybean gene encoding a small heat shock protein.</title>
        <authorList>
            <person name="Czarnecka E."/>
            <person name="Gurley W.B."/>
            <person name="Nagao R.T."/>
            <person name="Mosquera L.A."/>
            <person name="Key J.L."/>
        </authorList>
    </citation>
    <scope>NUCLEOTIDE SEQUENCE [GENOMIC DNA]</scope>
</reference>
<organism>
    <name type="scientific">Glycine max</name>
    <name type="common">Soybean</name>
    <name type="synonym">Glycine hispida</name>
    <dbReference type="NCBI Taxonomy" id="3847"/>
    <lineage>
        <taxon>Eukaryota</taxon>
        <taxon>Viridiplantae</taxon>
        <taxon>Streptophyta</taxon>
        <taxon>Embryophyta</taxon>
        <taxon>Tracheophyta</taxon>
        <taxon>Spermatophyta</taxon>
        <taxon>Magnoliopsida</taxon>
        <taxon>eudicotyledons</taxon>
        <taxon>Gunneridae</taxon>
        <taxon>Pentapetalae</taxon>
        <taxon>rosids</taxon>
        <taxon>fabids</taxon>
        <taxon>Fabales</taxon>
        <taxon>Fabaceae</taxon>
        <taxon>Papilionoideae</taxon>
        <taxon>50 kb inversion clade</taxon>
        <taxon>NPAAA clade</taxon>
        <taxon>indigoferoid/millettioid clade</taxon>
        <taxon>Phaseoleae</taxon>
        <taxon>Glycine</taxon>
        <taxon>Glycine subgen. Soja</taxon>
    </lineage>
</organism>
<name>HSP14_SOYBN</name>